<feature type="chain" id="PRO_0000228525" description="Ribonuclease 3">
    <location>
        <begin position="1"/>
        <end position="229"/>
    </location>
</feature>
<feature type="domain" description="RNase III" evidence="1">
    <location>
        <begin position="2"/>
        <end position="130"/>
    </location>
</feature>
<feature type="domain" description="DRBM" evidence="1">
    <location>
        <begin position="157"/>
        <end position="226"/>
    </location>
</feature>
<feature type="active site" evidence="1">
    <location>
        <position position="47"/>
    </location>
</feature>
<feature type="active site" evidence="1">
    <location>
        <position position="119"/>
    </location>
</feature>
<feature type="binding site" evidence="1">
    <location>
        <position position="43"/>
    </location>
    <ligand>
        <name>Mg(2+)</name>
        <dbReference type="ChEBI" id="CHEBI:18420"/>
    </ligand>
</feature>
<feature type="binding site" evidence="1">
    <location>
        <position position="116"/>
    </location>
    <ligand>
        <name>Mg(2+)</name>
        <dbReference type="ChEBI" id="CHEBI:18420"/>
    </ligand>
</feature>
<feature type="binding site" evidence="1">
    <location>
        <position position="119"/>
    </location>
    <ligand>
        <name>Mg(2+)</name>
        <dbReference type="ChEBI" id="CHEBI:18420"/>
    </ligand>
</feature>
<dbReference type="EC" id="3.1.26.3" evidence="1"/>
<dbReference type="EMBL" id="CP000112">
    <property type="protein sequence ID" value="ABB38505.1"/>
    <property type="molecule type" value="Genomic_DNA"/>
</dbReference>
<dbReference type="RefSeq" id="WP_011367649.1">
    <property type="nucleotide sequence ID" value="NC_007519.1"/>
</dbReference>
<dbReference type="SMR" id="Q310Z1"/>
<dbReference type="STRING" id="207559.Dde_1708"/>
<dbReference type="KEGG" id="dde:Dde_1708"/>
<dbReference type="eggNOG" id="COG0571">
    <property type="taxonomic scope" value="Bacteria"/>
</dbReference>
<dbReference type="HOGENOM" id="CLU_000907_1_3_7"/>
<dbReference type="Proteomes" id="UP000002710">
    <property type="component" value="Chromosome"/>
</dbReference>
<dbReference type="GO" id="GO:0005737">
    <property type="term" value="C:cytoplasm"/>
    <property type="evidence" value="ECO:0007669"/>
    <property type="project" value="UniProtKB-SubCell"/>
</dbReference>
<dbReference type="GO" id="GO:0003725">
    <property type="term" value="F:double-stranded RNA binding"/>
    <property type="evidence" value="ECO:0007669"/>
    <property type="project" value="TreeGrafter"/>
</dbReference>
<dbReference type="GO" id="GO:0046872">
    <property type="term" value="F:metal ion binding"/>
    <property type="evidence" value="ECO:0007669"/>
    <property type="project" value="UniProtKB-KW"/>
</dbReference>
<dbReference type="GO" id="GO:0004525">
    <property type="term" value="F:ribonuclease III activity"/>
    <property type="evidence" value="ECO:0007669"/>
    <property type="project" value="UniProtKB-UniRule"/>
</dbReference>
<dbReference type="GO" id="GO:0019843">
    <property type="term" value="F:rRNA binding"/>
    <property type="evidence" value="ECO:0007669"/>
    <property type="project" value="UniProtKB-KW"/>
</dbReference>
<dbReference type="GO" id="GO:0006397">
    <property type="term" value="P:mRNA processing"/>
    <property type="evidence" value="ECO:0007669"/>
    <property type="project" value="UniProtKB-UniRule"/>
</dbReference>
<dbReference type="GO" id="GO:0010468">
    <property type="term" value="P:regulation of gene expression"/>
    <property type="evidence" value="ECO:0007669"/>
    <property type="project" value="TreeGrafter"/>
</dbReference>
<dbReference type="GO" id="GO:0006364">
    <property type="term" value="P:rRNA processing"/>
    <property type="evidence" value="ECO:0007669"/>
    <property type="project" value="UniProtKB-UniRule"/>
</dbReference>
<dbReference type="GO" id="GO:0008033">
    <property type="term" value="P:tRNA processing"/>
    <property type="evidence" value="ECO:0007669"/>
    <property type="project" value="UniProtKB-KW"/>
</dbReference>
<dbReference type="CDD" id="cd10845">
    <property type="entry name" value="DSRM_RNAse_III_family"/>
    <property type="match status" value="1"/>
</dbReference>
<dbReference type="CDD" id="cd00593">
    <property type="entry name" value="RIBOc"/>
    <property type="match status" value="1"/>
</dbReference>
<dbReference type="FunFam" id="1.10.1520.10:FF:000001">
    <property type="entry name" value="Ribonuclease 3"/>
    <property type="match status" value="1"/>
</dbReference>
<dbReference type="Gene3D" id="3.30.160.20">
    <property type="match status" value="1"/>
</dbReference>
<dbReference type="Gene3D" id="1.10.1520.10">
    <property type="entry name" value="Ribonuclease III domain"/>
    <property type="match status" value="1"/>
</dbReference>
<dbReference type="HAMAP" id="MF_00104">
    <property type="entry name" value="RNase_III"/>
    <property type="match status" value="1"/>
</dbReference>
<dbReference type="InterPro" id="IPR014720">
    <property type="entry name" value="dsRBD_dom"/>
</dbReference>
<dbReference type="InterPro" id="IPR011907">
    <property type="entry name" value="RNase_III"/>
</dbReference>
<dbReference type="InterPro" id="IPR000999">
    <property type="entry name" value="RNase_III_dom"/>
</dbReference>
<dbReference type="InterPro" id="IPR036389">
    <property type="entry name" value="RNase_III_sf"/>
</dbReference>
<dbReference type="NCBIfam" id="TIGR02191">
    <property type="entry name" value="RNaseIII"/>
    <property type="match status" value="1"/>
</dbReference>
<dbReference type="PANTHER" id="PTHR11207:SF0">
    <property type="entry name" value="RIBONUCLEASE 3"/>
    <property type="match status" value="1"/>
</dbReference>
<dbReference type="PANTHER" id="PTHR11207">
    <property type="entry name" value="RIBONUCLEASE III"/>
    <property type="match status" value="1"/>
</dbReference>
<dbReference type="Pfam" id="PF00035">
    <property type="entry name" value="dsrm"/>
    <property type="match status" value="1"/>
</dbReference>
<dbReference type="Pfam" id="PF14622">
    <property type="entry name" value="Ribonucleas_3_3"/>
    <property type="match status" value="1"/>
</dbReference>
<dbReference type="SMART" id="SM00358">
    <property type="entry name" value="DSRM"/>
    <property type="match status" value="1"/>
</dbReference>
<dbReference type="SMART" id="SM00535">
    <property type="entry name" value="RIBOc"/>
    <property type="match status" value="1"/>
</dbReference>
<dbReference type="SUPFAM" id="SSF54768">
    <property type="entry name" value="dsRNA-binding domain-like"/>
    <property type="match status" value="1"/>
</dbReference>
<dbReference type="SUPFAM" id="SSF69065">
    <property type="entry name" value="RNase III domain-like"/>
    <property type="match status" value="1"/>
</dbReference>
<dbReference type="PROSITE" id="PS50137">
    <property type="entry name" value="DS_RBD"/>
    <property type="match status" value="1"/>
</dbReference>
<dbReference type="PROSITE" id="PS00517">
    <property type="entry name" value="RNASE_3_1"/>
    <property type="match status" value="1"/>
</dbReference>
<dbReference type="PROSITE" id="PS50142">
    <property type="entry name" value="RNASE_3_2"/>
    <property type="match status" value="1"/>
</dbReference>
<name>RNC_OLEA2</name>
<sequence length="229" mass="25457">MFEKLQDVLCYRFADVRLLETALTHSSYANERGTEIEHNERLEYLGDAVLELTVSEQLFTRFPEAREGQLTRMRARLVSKPSLAELARELKLDTYLLLGKGEESQGGRTRSSVLSDAFEAILGAIFLDGGYAAAGKTVLHVFSSRWPQGAEAARTKDAKSTLQELTQRLFKERPVYTLLGSSGPEHEKIFKVRLLLPDGRALETEGQSVKRAEQKAAGLALELLEGESA</sequence>
<reference key="1">
    <citation type="journal article" date="2011" name="J. Bacteriol.">
        <title>Complete genome sequence and updated annotation of Desulfovibrio alaskensis G20.</title>
        <authorList>
            <person name="Hauser L.J."/>
            <person name="Land M.L."/>
            <person name="Brown S.D."/>
            <person name="Larimer F."/>
            <person name="Keller K.L."/>
            <person name="Rapp-Giles B.J."/>
            <person name="Price M.N."/>
            <person name="Lin M."/>
            <person name="Bruce D.C."/>
            <person name="Detter J.C."/>
            <person name="Tapia R."/>
            <person name="Han C.S."/>
            <person name="Goodwin L.A."/>
            <person name="Cheng J.F."/>
            <person name="Pitluck S."/>
            <person name="Copeland A."/>
            <person name="Lucas S."/>
            <person name="Nolan M."/>
            <person name="Lapidus A.L."/>
            <person name="Palumbo A.V."/>
            <person name="Wall J.D."/>
        </authorList>
    </citation>
    <scope>NUCLEOTIDE SEQUENCE [LARGE SCALE GENOMIC DNA]</scope>
    <source>
        <strain>ATCC BAA-1058 / DSM 17464 / G20</strain>
    </source>
</reference>
<proteinExistence type="inferred from homology"/>
<protein>
    <recommendedName>
        <fullName evidence="1">Ribonuclease 3</fullName>
        <ecNumber evidence="1">3.1.26.3</ecNumber>
    </recommendedName>
    <alternativeName>
        <fullName evidence="1">Ribonuclease III</fullName>
        <shortName evidence="1">RNase III</shortName>
    </alternativeName>
</protein>
<organism>
    <name type="scientific">Oleidesulfovibrio alaskensis (strain ATCC BAA-1058 / DSM 17464 / G20)</name>
    <name type="common">Desulfovibrio alaskensis</name>
    <dbReference type="NCBI Taxonomy" id="207559"/>
    <lineage>
        <taxon>Bacteria</taxon>
        <taxon>Pseudomonadati</taxon>
        <taxon>Thermodesulfobacteriota</taxon>
        <taxon>Desulfovibrionia</taxon>
        <taxon>Desulfovibrionales</taxon>
        <taxon>Desulfovibrionaceae</taxon>
        <taxon>Oleidesulfovibrio</taxon>
    </lineage>
</organism>
<gene>
    <name evidence="1" type="primary">rnc</name>
    <name type="ordered locus">Dde_1708</name>
</gene>
<comment type="function">
    <text evidence="1">Digests double-stranded RNA. Involved in the processing of primary rRNA transcript to yield the immediate precursors to the large and small rRNAs (23S and 16S). Processes some mRNAs, and tRNAs when they are encoded in the rRNA operon. Processes pre-crRNA and tracrRNA of type II CRISPR loci if present in the organism.</text>
</comment>
<comment type="catalytic activity">
    <reaction evidence="1">
        <text>Endonucleolytic cleavage to 5'-phosphomonoester.</text>
        <dbReference type="EC" id="3.1.26.3"/>
    </reaction>
</comment>
<comment type="cofactor">
    <cofactor evidence="1">
        <name>Mg(2+)</name>
        <dbReference type="ChEBI" id="CHEBI:18420"/>
    </cofactor>
</comment>
<comment type="subunit">
    <text evidence="1">Homodimer.</text>
</comment>
<comment type="subcellular location">
    <subcellularLocation>
        <location evidence="1">Cytoplasm</location>
    </subcellularLocation>
</comment>
<comment type="similarity">
    <text evidence="1">Belongs to the ribonuclease III family.</text>
</comment>
<evidence type="ECO:0000255" key="1">
    <source>
        <dbReference type="HAMAP-Rule" id="MF_00104"/>
    </source>
</evidence>
<keyword id="KW-0963">Cytoplasm</keyword>
<keyword id="KW-0255">Endonuclease</keyword>
<keyword id="KW-0378">Hydrolase</keyword>
<keyword id="KW-0460">Magnesium</keyword>
<keyword id="KW-0479">Metal-binding</keyword>
<keyword id="KW-0507">mRNA processing</keyword>
<keyword id="KW-0540">Nuclease</keyword>
<keyword id="KW-1185">Reference proteome</keyword>
<keyword id="KW-0694">RNA-binding</keyword>
<keyword id="KW-0698">rRNA processing</keyword>
<keyword id="KW-0699">rRNA-binding</keyword>
<keyword id="KW-0819">tRNA processing</keyword>
<accession>Q310Z1</accession>